<reference key="1">
    <citation type="journal article" date="2007" name="Nat. Biotechnol.">
        <title>Complete genome sequence of the erythromycin-producing bacterium Saccharopolyspora erythraea NRRL23338.</title>
        <authorList>
            <person name="Oliynyk M."/>
            <person name="Samborskyy M."/>
            <person name="Lester J.B."/>
            <person name="Mironenko T."/>
            <person name="Scott N."/>
            <person name="Dickens S."/>
            <person name="Haydock S.F."/>
            <person name="Leadlay P.F."/>
        </authorList>
    </citation>
    <scope>NUCLEOTIDE SEQUENCE [LARGE SCALE GENOMIC DNA]</scope>
    <source>
        <strain>ATCC 11635 / DSM 40517 / JCM 4748 / NBRC 13426 / NCIMB 8594 / NRRL 2338</strain>
    </source>
</reference>
<proteinExistence type="inferred from homology"/>
<sequence>MTDVQSLDEGVYEATAVLDNGAFGTRTVRFETGRLAKQAAGSVVAYLDDDTMLLSATTASKQPKEHFDFFPLTVDVEERMYAAGRIPGSFFRREGRPSTDAILTCRLIDRPLRPSFVDGLRNEVQVVVTVMSLDPQDPYDVLAINGASASTQLSGLPFSGPVGGTRMALIDGQWVAFPTYEQLERAVFDMVVAGRIVGDDVAIMMVEAEATEKTAGLVSAGAQAPTEEVVAAGLEAAKPFIRTLCQAQQQLAQAAGKATEEFPVFPAYADDAFTAVEQAASAELAEALKIASKQERENRLDEIKAAVLEKVGTGEGEQFEGREKEVGAAFRSLTKKLVRQRIIRDQVRIDGRGLTDIRSLSAEVGVIPRAHGSALFERGETQILGVSTLNMLRLEQTIDSLSPETTKRYMHHYNFPPYSTGETGRVGSPKRREIGHGALAERALIPVLPTREEFPYALRQVSEALGSNGSTSMGSVCASTLSLLNAGVPLKAPVAGIAMGLVSDEIDGKTHYVALTDILGAEDAFGDMDFKVAGTKEFVTALQLDTKLDGIPSEVLAQALGQARDARFTILEVMAEAIGKPDEMSPHAPRVTSISIPVDKIGEVIGPKGKMINSITEETGAEITIEDDGTIYVGAADGPSAEAAIDKINAIANPQLPKVGERFLGTVVKTAAFGAFVSLLPGKDGLVHISKLGNGKRIGKVEDVVNVGDKLRVEIADIDSRGKISLVVVDDEAENADKGGESEETSEQGA</sequence>
<protein>
    <recommendedName>
        <fullName evidence="1">Polyribonucleotide nucleotidyltransferase</fullName>
        <ecNumber evidence="1">2.7.7.8</ecNumber>
    </recommendedName>
    <alternativeName>
        <fullName evidence="1">Polynucleotide phosphorylase</fullName>
        <shortName evidence="1">PNPase</shortName>
    </alternativeName>
</protein>
<feature type="chain" id="PRO_0000329825" description="Polyribonucleotide nucleotidyltransferase">
    <location>
        <begin position="1"/>
        <end position="750"/>
    </location>
</feature>
<feature type="domain" description="KH" evidence="1">
    <location>
        <begin position="589"/>
        <end position="648"/>
    </location>
</feature>
<feature type="domain" description="S1 motif" evidence="1">
    <location>
        <begin position="660"/>
        <end position="729"/>
    </location>
</feature>
<feature type="binding site" evidence="1">
    <location>
        <position position="523"/>
    </location>
    <ligand>
        <name>Mg(2+)</name>
        <dbReference type="ChEBI" id="CHEBI:18420"/>
    </ligand>
</feature>
<feature type="binding site" evidence="1">
    <location>
        <position position="529"/>
    </location>
    <ligand>
        <name>Mg(2+)</name>
        <dbReference type="ChEBI" id="CHEBI:18420"/>
    </ligand>
</feature>
<accession>A4FM22</accession>
<gene>
    <name evidence="1" type="primary">pnp</name>
    <name type="ordered locus">SACE_5914</name>
</gene>
<keyword id="KW-0963">Cytoplasm</keyword>
<keyword id="KW-0460">Magnesium</keyword>
<keyword id="KW-0479">Metal-binding</keyword>
<keyword id="KW-0548">Nucleotidyltransferase</keyword>
<keyword id="KW-1185">Reference proteome</keyword>
<keyword id="KW-0694">RNA-binding</keyword>
<keyword id="KW-0808">Transferase</keyword>
<dbReference type="EC" id="2.7.7.8" evidence="1"/>
<dbReference type="EMBL" id="AM420293">
    <property type="protein sequence ID" value="CAM05097.1"/>
    <property type="molecule type" value="Genomic_DNA"/>
</dbReference>
<dbReference type="RefSeq" id="WP_011874882.1">
    <property type="nucleotide sequence ID" value="NC_009142.1"/>
</dbReference>
<dbReference type="SMR" id="A4FM22"/>
<dbReference type="STRING" id="405948.SACE_5914"/>
<dbReference type="KEGG" id="sen:SACE_5914"/>
<dbReference type="eggNOG" id="COG1185">
    <property type="taxonomic scope" value="Bacteria"/>
</dbReference>
<dbReference type="HOGENOM" id="CLU_004217_2_2_11"/>
<dbReference type="OrthoDB" id="9804305at2"/>
<dbReference type="Proteomes" id="UP000006728">
    <property type="component" value="Chromosome"/>
</dbReference>
<dbReference type="GO" id="GO:0005829">
    <property type="term" value="C:cytosol"/>
    <property type="evidence" value="ECO:0007669"/>
    <property type="project" value="TreeGrafter"/>
</dbReference>
<dbReference type="GO" id="GO:0000175">
    <property type="term" value="F:3'-5'-RNA exonuclease activity"/>
    <property type="evidence" value="ECO:0007669"/>
    <property type="project" value="TreeGrafter"/>
</dbReference>
<dbReference type="GO" id="GO:0000287">
    <property type="term" value="F:magnesium ion binding"/>
    <property type="evidence" value="ECO:0007669"/>
    <property type="project" value="UniProtKB-UniRule"/>
</dbReference>
<dbReference type="GO" id="GO:0004654">
    <property type="term" value="F:polyribonucleotide nucleotidyltransferase activity"/>
    <property type="evidence" value="ECO:0007669"/>
    <property type="project" value="UniProtKB-UniRule"/>
</dbReference>
<dbReference type="GO" id="GO:0003723">
    <property type="term" value="F:RNA binding"/>
    <property type="evidence" value="ECO:0007669"/>
    <property type="project" value="UniProtKB-UniRule"/>
</dbReference>
<dbReference type="GO" id="GO:0006402">
    <property type="term" value="P:mRNA catabolic process"/>
    <property type="evidence" value="ECO:0007669"/>
    <property type="project" value="UniProtKB-UniRule"/>
</dbReference>
<dbReference type="GO" id="GO:0006396">
    <property type="term" value="P:RNA processing"/>
    <property type="evidence" value="ECO:0007669"/>
    <property type="project" value="InterPro"/>
</dbReference>
<dbReference type="CDD" id="cd02393">
    <property type="entry name" value="KH-I_PNPase"/>
    <property type="match status" value="1"/>
</dbReference>
<dbReference type="CDD" id="cd11364">
    <property type="entry name" value="RNase_PH_PNPase_2"/>
    <property type="match status" value="1"/>
</dbReference>
<dbReference type="CDD" id="cd04472">
    <property type="entry name" value="S1_PNPase"/>
    <property type="match status" value="1"/>
</dbReference>
<dbReference type="FunFam" id="2.40.50.140:FF:000069">
    <property type="entry name" value="Polyribonucleotide nucleotidyltransferase"/>
    <property type="match status" value="1"/>
</dbReference>
<dbReference type="FunFam" id="3.30.1370.10:FF:000001">
    <property type="entry name" value="Polyribonucleotide nucleotidyltransferase"/>
    <property type="match status" value="1"/>
</dbReference>
<dbReference type="FunFam" id="3.30.230.70:FF:000001">
    <property type="entry name" value="Polyribonucleotide nucleotidyltransferase"/>
    <property type="match status" value="1"/>
</dbReference>
<dbReference type="FunFam" id="3.30.230.70:FF:000002">
    <property type="entry name" value="Polyribonucleotide nucleotidyltransferase"/>
    <property type="match status" value="1"/>
</dbReference>
<dbReference type="Gene3D" id="3.30.230.70">
    <property type="entry name" value="GHMP Kinase, N-terminal domain"/>
    <property type="match status" value="2"/>
</dbReference>
<dbReference type="Gene3D" id="3.30.1370.10">
    <property type="entry name" value="K Homology domain, type 1"/>
    <property type="match status" value="1"/>
</dbReference>
<dbReference type="Gene3D" id="2.40.50.140">
    <property type="entry name" value="Nucleic acid-binding proteins"/>
    <property type="match status" value="1"/>
</dbReference>
<dbReference type="HAMAP" id="MF_01595">
    <property type="entry name" value="PNPase"/>
    <property type="match status" value="1"/>
</dbReference>
<dbReference type="InterPro" id="IPR001247">
    <property type="entry name" value="ExoRNase_PH_dom1"/>
</dbReference>
<dbReference type="InterPro" id="IPR036345">
    <property type="entry name" value="ExoRNase_PH_dom2_sf"/>
</dbReference>
<dbReference type="InterPro" id="IPR014069">
    <property type="entry name" value="GPSI/PNP"/>
</dbReference>
<dbReference type="InterPro" id="IPR004087">
    <property type="entry name" value="KH_dom"/>
</dbReference>
<dbReference type="InterPro" id="IPR004088">
    <property type="entry name" value="KH_dom_type_1"/>
</dbReference>
<dbReference type="InterPro" id="IPR036612">
    <property type="entry name" value="KH_dom_type_1_sf"/>
</dbReference>
<dbReference type="InterPro" id="IPR012340">
    <property type="entry name" value="NA-bd_OB-fold"/>
</dbReference>
<dbReference type="InterPro" id="IPR012162">
    <property type="entry name" value="PNPase"/>
</dbReference>
<dbReference type="InterPro" id="IPR027408">
    <property type="entry name" value="PNPase/RNase_PH_dom_sf"/>
</dbReference>
<dbReference type="InterPro" id="IPR015848">
    <property type="entry name" value="PNPase_PH_RNA-bd_bac/org-type"/>
</dbReference>
<dbReference type="InterPro" id="IPR036456">
    <property type="entry name" value="PNPase_PH_RNA-bd_sf"/>
</dbReference>
<dbReference type="InterPro" id="IPR020568">
    <property type="entry name" value="Ribosomal_Su5_D2-typ_SF"/>
</dbReference>
<dbReference type="InterPro" id="IPR003029">
    <property type="entry name" value="S1_domain"/>
</dbReference>
<dbReference type="NCBIfam" id="TIGR03591">
    <property type="entry name" value="polynuc_phos"/>
    <property type="match status" value="1"/>
</dbReference>
<dbReference type="NCBIfam" id="TIGR02696">
    <property type="entry name" value="pppGpp_PNP"/>
    <property type="match status" value="1"/>
</dbReference>
<dbReference type="NCBIfam" id="NF008805">
    <property type="entry name" value="PRK11824.1"/>
    <property type="match status" value="1"/>
</dbReference>
<dbReference type="PANTHER" id="PTHR11252">
    <property type="entry name" value="POLYRIBONUCLEOTIDE NUCLEOTIDYLTRANSFERASE"/>
    <property type="match status" value="1"/>
</dbReference>
<dbReference type="PANTHER" id="PTHR11252:SF0">
    <property type="entry name" value="POLYRIBONUCLEOTIDE NUCLEOTIDYLTRANSFERASE 1, MITOCHONDRIAL"/>
    <property type="match status" value="1"/>
</dbReference>
<dbReference type="Pfam" id="PF00013">
    <property type="entry name" value="KH_1"/>
    <property type="match status" value="1"/>
</dbReference>
<dbReference type="Pfam" id="PF03726">
    <property type="entry name" value="PNPase"/>
    <property type="match status" value="1"/>
</dbReference>
<dbReference type="Pfam" id="PF01138">
    <property type="entry name" value="RNase_PH"/>
    <property type="match status" value="2"/>
</dbReference>
<dbReference type="Pfam" id="PF00575">
    <property type="entry name" value="S1"/>
    <property type="match status" value="1"/>
</dbReference>
<dbReference type="PIRSF" id="PIRSF005499">
    <property type="entry name" value="PNPase"/>
    <property type="match status" value="1"/>
</dbReference>
<dbReference type="SMART" id="SM00322">
    <property type="entry name" value="KH"/>
    <property type="match status" value="1"/>
</dbReference>
<dbReference type="SMART" id="SM00316">
    <property type="entry name" value="S1"/>
    <property type="match status" value="1"/>
</dbReference>
<dbReference type="SUPFAM" id="SSF54791">
    <property type="entry name" value="Eukaryotic type KH-domain (KH-domain type I)"/>
    <property type="match status" value="1"/>
</dbReference>
<dbReference type="SUPFAM" id="SSF50249">
    <property type="entry name" value="Nucleic acid-binding proteins"/>
    <property type="match status" value="1"/>
</dbReference>
<dbReference type="SUPFAM" id="SSF46915">
    <property type="entry name" value="Polynucleotide phosphorylase/guanosine pentaphosphate synthase (PNPase/GPSI), domain 3"/>
    <property type="match status" value="1"/>
</dbReference>
<dbReference type="SUPFAM" id="SSF55666">
    <property type="entry name" value="Ribonuclease PH domain 2-like"/>
    <property type="match status" value="2"/>
</dbReference>
<dbReference type="SUPFAM" id="SSF54211">
    <property type="entry name" value="Ribosomal protein S5 domain 2-like"/>
    <property type="match status" value="2"/>
</dbReference>
<dbReference type="PROSITE" id="PS50084">
    <property type="entry name" value="KH_TYPE_1"/>
    <property type="match status" value="1"/>
</dbReference>
<dbReference type="PROSITE" id="PS50126">
    <property type="entry name" value="S1"/>
    <property type="match status" value="1"/>
</dbReference>
<evidence type="ECO:0000255" key="1">
    <source>
        <dbReference type="HAMAP-Rule" id="MF_01595"/>
    </source>
</evidence>
<comment type="function">
    <text evidence="1">Involved in mRNA degradation. Catalyzes the phosphorolysis of single-stranded polyribonucleotides processively in the 3'- to 5'-direction.</text>
</comment>
<comment type="catalytic activity">
    <reaction evidence="1">
        <text>RNA(n+1) + phosphate = RNA(n) + a ribonucleoside 5'-diphosphate</text>
        <dbReference type="Rhea" id="RHEA:22096"/>
        <dbReference type="Rhea" id="RHEA-COMP:14527"/>
        <dbReference type="Rhea" id="RHEA-COMP:17342"/>
        <dbReference type="ChEBI" id="CHEBI:43474"/>
        <dbReference type="ChEBI" id="CHEBI:57930"/>
        <dbReference type="ChEBI" id="CHEBI:140395"/>
        <dbReference type="EC" id="2.7.7.8"/>
    </reaction>
</comment>
<comment type="cofactor">
    <cofactor evidence="1">
        <name>Mg(2+)</name>
        <dbReference type="ChEBI" id="CHEBI:18420"/>
    </cofactor>
</comment>
<comment type="subcellular location">
    <subcellularLocation>
        <location evidence="1">Cytoplasm</location>
    </subcellularLocation>
</comment>
<comment type="similarity">
    <text evidence="1">Belongs to the polyribonucleotide nucleotidyltransferase family.</text>
</comment>
<organism>
    <name type="scientific">Saccharopolyspora erythraea (strain ATCC 11635 / DSM 40517 / JCM 4748 / NBRC 13426 / NCIMB 8594 / NRRL 2338)</name>
    <dbReference type="NCBI Taxonomy" id="405948"/>
    <lineage>
        <taxon>Bacteria</taxon>
        <taxon>Bacillati</taxon>
        <taxon>Actinomycetota</taxon>
        <taxon>Actinomycetes</taxon>
        <taxon>Pseudonocardiales</taxon>
        <taxon>Pseudonocardiaceae</taxon>
        <taxon>Saccharopolyspora</taxon>
    </lineage>
</organism>
<name>PNP_SACEN</name>